<proteinExistence type="inferred from homology"/>
<protein>
    <recommendedName>
        <fullName evidence="1">ATP-dependent lipid A-core flippase</fullName>
        <ecNumber evidence="1">7.5.2.6</ecNumber>
    </recommendedName>
    <alternativeName>
        <fullName evidence="1">Lipid A export ATP-binding/permease protein MsbA</fullName>
    </alternativeName>
</protein>
<sequence length="590" mass="64468">MSNPAKSEQSAGHDVKVGKRLMGYLRPELRIFIAAILAMAVVAASEGVIPKVVNDLLDKGFGGEYAGKLWHVPAILTGVALIRGVAQFASGYLLSLISNRVLLKMRMQMFDRMLHAPAHFYHRNTAASLINAVIFEVNQVLSILTSVFITLVRDSLTVVALLIYLFYTNWRLTLIVSVILPVIGYLMSKINRRLRRLNRDHQTLTNSAAYVVEEAAGGYKVVKLHGGEAYEMNRFRNMADRLKNYSMRMAVAGGLNQPVTAFLAALALSVIITIAMIQAQGNQTTIGGFTGFVMAMLLLISPLKHLTDINQPLTRGLTAAELIFRLIDEPVEPQDGGVRLERAKGDLVFERVGFRYGEGTRPALEGIDIRVPAGEVVALVGPSGSGKTTLVNLVPRFFDPTDGRILLDGHAIGDIALRELRNQIAFVSQDVVLFNDTVAANVAYGARSEEEIDMARVERALQAAYLTEVVKNLPEGVNTNIGDNGMKLSGGQRQRLAIARAIYKDAPILILDEATSALDSESERQVQAALEALMVGRTTLVIAHRLSTIENADRIVVLDHGRVAEHGTHEELLAANGLYAGLHRIQFATH</sequence>
<organism>
    <name type="scientific">Cupriavidus pinatubonensis (strain JMP 134 / LMG 1197)</name>
    <name type="common">Cupriavidus necator (strain JMP 134)</name>
    <dbReference type="NCBI Taxonomy" id="264198"/>
    <lineage>
        <taxon>Bacteria</taxon>
        <taxon>Pseudomonadati</taxon>
        <taxon>Pseudomonadota</taxon>
        <taxon>Betaproteobacteria</taxon>
        <taxon>Burkholderiales</taxon>
        <taxon>Burkholderiaceae</taxon>
        <taxon>Cupriavidus</taxon>
    </lineage>
</organism>
<name>MSBA_CUPPJ</name>
<evidence type="ECO:0000255" key="1">
    <source>
        <dbReference type="HAMAP-Rule" id="MF_01703"/>
    </source>
</evidence>
<accession>Q46Y89</accession>
<gene>
    <name evidence="1" type="primary">msbA</name>
    <name type="ordered locus">Reut_A2533</name>
</gene>
<reference key="1">
    <citation type="journal article" date="2010" name="PLoS ONE">
        <title>The complete multipartite genome sequence of Cupriavidus necator JMP134, a versatile pollutant degrader.</title>
        <authorList>
            <person name="Lykidis A."/>
            <person name="Perez-Pantoja D."/>
            <person name="Ledger T."/>
            <person name="Mavromatis K."/>
            <person name="Anderson I.J."/>
            <person name="Ivanova N.N."/>
            <person name="Hooper S.D."/>
            <person name="Lapidus A."/>
            <person name="Lucas S."/>
            <person name="Gonzalez B."/>
            <person name="Kyrpides N.C."/>
        </authorList>
    </citation>
    <scope>NUCLEOTIDE SEQUENCE [LARGE SCALE GENOMIC DNA]</scope>
    <source>
        <strain>JMP134 / LMG 1197</strain>
    </source>
</reference>
<dbReference type="EC" id="7.5.2.6" evidence="1"/>
<dbReference type="EMBL" id="CP000090">
    <property type="protein sequence ID" value="AAZ61894.1"/>
    <property type="molecule type" value="Genomic_DNA"/>
</dbReference>
<dbReference type="SMR" id="Q46Y89"/>
<dbReference type="STRING" id="264198.Reut_A2533"/>
<dbReference type="KEGG" id="reu:Reut_A2533"/>
<dbReference type="eggNOG" id="COG1132">
    <property type="taxonomic scope" value="Bacteria"/>
</dbReference>
<dbReference type="HOGENOM" id="CLU_000604_84_3_4"/>
<dbReference type="GO" id="GO:0005886">
    <property type="term" value="C:plasma membrane"/>
    <property type="evidence" value="ECO:0007669"/>
    <property type="project" value="UniProtKB-SubCell"/>
</dbReference>
<dbReference type="GO" id="GO:0015421">
    <property type="term" value="F:ABC-type oligopeptide transporter activity"/>
    <property type="evidence" value="ECO:0007669"/>
    <property type="project" value="TreeGrafter"/>
</dbReference>
<dbReference type="GO" id="GO:0005524">
    <property type="term" value="F:ATP binding"/>
    <property type="evidence" value="ECO:0007669"/>
    <property type="project" value="UniProtKB-KW"/>
</dbReference>
<dbReference type="GO" id="GO:0016887">
    <property type="term" value="F:ATP hydrolysis activity"/>
    <property type="evidence" value="ECO:0007669"/>
    <property type="project" value="InterPro"/>
</dbReference>
<dbReference type="GO" id="GO:0034040">
    <property type="term" value="F:ATPase-coupled lipid transmembrane transporter activity"/>
    <property type="evidence" value="ECO:0007669"/>
    <property type="project" value="InterPro"/>
</dbReference>
<dbReference type="CDD" id="cd18552">
    <property type="entry name" value="ABC_6TM_MsbA_like"/>
    <property type="match status" value="1"/>
</dbReference>
<dbReference type="FunFam" id="3.40.50.300:FF:000221">
    <property type="entry name" value="Multidrug ABC transporter ATP-binding protein"/>
    <property type="match status" value="1"/>
</dbReference>
<dbReference type="Gene3D" id="1.20.1560.10">
    <property type="entry name" value="ABC transporter type 1, transmembrane domain"/>
    <property type="match status" value="1"/>
</dbReference>
<dbReference type="Gene3D" id="3.40.50.300">
    <property type="entry name" value="P-loop containing nucleotide triphosphate hydrolases"/>
    <property type="match status" value="1"/>
</dbReference>
<dbReference type="InterPro" id="IPR003593">
    <property type="entry name" value="AAA+_ATPase"/>
</dbReference>
<dbReference type="InterPro" id="IPR011527">
    <property type="entry name" value="ABC1_TM_dom"/>
</dbReference>
<dbReference type="InterPro" id="IPR036640">
    <property type="entry name" value="ABC1_TM_sf"/>
</dbReference>
<dbReference type="InterPro" id="IPR003439">
    <property type="entry name" value="ABC_transporter-like_ATP-bd"/>
</dbReference>
<dbReference type="InterPro" id="IPR017871">
    <property type="entry name" value="ABC_transporter-like_CS"/>
</dbReference>
<dbReference type="InterPro" id="IPR011917">
    <property type="entry name" value="ABC_transpr_lipidA"/>
</dbReference>
<dbReference type="InterPro" id="IPR027417">
    <property type="entry name" value="P-loop_NTPase"/>
</dbReference>
<dbReference type="InterPro" id="IPR039421">
    <property type="entry name" value="Type_1_exporter"/>
</dbReference>
<dbReference type="NCBIfam" id="TIGR02203">
    <property type="entry name" value="MsbA_lipidA"/>
    <property type="match status" value="1"/>
</dbReference>
<dbReference type="PANTHER" id="PTHR43394:SF1">
    <property type="entry name" value="ATP-BINDING CASSETTE SUB-FAMILY B MEMBER 10, MITOCHONDRIAL"/>
    <property type="match status" value="1"/>
</dbReference>
<dbReference type="PANTHER" id="PTHR43394">
    <property type="entry name" value="ATP-DEPENDENT PERMEASE MDL1, MITOCHONDRIAL"/>
    <property type="match status" value="1"/>
</dbReference>
<dbReference type="Pfam" id="PF00664">
    <property type="entry name" value="ABC_membrane"/>
    <property type="match status" value="1"/>
</dbReference>
<dbReference type="Pfam" id="PF00005">
    <property type="entry name" value="ABC_tran"/>
    <property type="match status" value="1"/>
</dbReference>
<dbReference type="SMART" id="SM00382">
    <property type="entry name" value="AAA"/>
    <property type="match status" value="1"/>
</dbReference>
<dbReference type="SUPFAM" id="SSF90123">
    <property type="entry name" value="ABC transporter transmembrane region"/>
    <property type="match status" value="1"/>
</dbReference>
<dbReference type="SUPFAM" id="SSF52540">
    <property type="entry name" value="P-loop containing nucleoside triphosphate hydrolases"/>
    <property type="match status" value="1"/>
</dbReference>
<dbReference type="PROSITE" id="PS50929">
    <property type="entry name" value="ABC_TM1F"/>
    <property type="match status" value="1"/>
</dbReference>
<dbReference type="PROSITE" id="PS00211">
    <property type="entry name" value="ABC_TRANSPORTER_1"/>
    <property type="match status" value="1"/>
</dbReference>
<dbReference type="PROSITE" id="PS50893">
    <property type="entry name" value="ABC_TRANSPORTER_2"/>
    <property type="match status" value="1"/>
</dbReference>
<dbReference type="PROSITE" id="PS51239">
    <property type="entry name" value="MSBA"/>
    <property type="match status" value="1"/>
</dbReference>
<comment type="function">
    <text evidence="1">Involved in lipopolysaccharide (LPS) biosynthesis. Translocates lipid A-core from the inner to the outer leaflet of the inner membrane. Transmembrane domains (TMD) form a pore in the inner membrane and the ATP-binding domain (NBD) is responsible for energy generation.</text>
</comment>
<comment type="catalytic activity">
    <reaction evidence="1">
        <text>ATP + H2O + lipid A-core oligosaccharideSide 1 = ADP + phosphate + lipid A-core oligosaccharideSide 2.</text>
        <dbReference type="EC" id="7.5.2.6"/>
    </reaction>
</comment>
<comment type="subunit">
    <text evidence="1">Homodimer.</text>
</comment>
<comment type="subcellular location">
    <subcellularLocation>
        <location evidence="1">Cell inner membrane</location>
        <topology evidence="1">Multi-pass membrane protein</topology>
    </subcellularLocation>
</comment>
<comment type="domain">
    <text evidence="1">In MsbA the ATP-binding domain (NBD) and the transmembrane domain (TMD) are fused.</text>
</comment>
<comment type="similarity">
    <text evidence="1">Belongs to the ABC transporter superfamily. Lipid exporter (TC 3.A.1.106) family.</text>
</comment>
<keyword id="KW-0067">ATP-binding</keyword>
<keyword id="KW-0997">Cell inner membrane</keyword>
<keyword id="KW-1003">Cell membrane</keyword>
<keyword id="KW-0445">Lipid transport</keyword>
<keyword id="KW-0472">Membrane</keyword>
<keyword id="KW-0547">Nucleotide-binding</keyword>
<keyword id="KW-1278">Translocase</keyword>
<keyword id="KW-0812">Transmembrane</keyword>
<keyword id="KW-1133">Transmembrane helix</keyword>
<keyword id="KW-0813">Transport</keyword>
<feature type="chain" id="PRO_0000271646" description="ATP-dependent lipid A-core flippase">
    <location>
        <begin position="1"/>
        <end position="590"/>
    </location>
</feature>
<feature type="transmembrane region" description="Helical" evidence="1">
    <location>
        <begin position="31"/>
        <end position="51"/>
    </location>
</feature>
<feature type="transmembrane region" description="Helical" evidence="1">
    <location>
        <begin position="74"/>
        <end position="94"/>
    </location>
</feature>
<feature type="transmembrane region" description="Helical" evidence="1">
    <location>
        <begin position="132"/>
        <end position="152"/>
    </location>
</feature>
<feature type="transmembrane region" description="Helical" evidence="1">
    <location>
        <begin position="159"/>
        <end position="179"/>
    </location>
</feature>
<feature type="transmembrane region" description="Helical" evidence="1">
    <location>
        <begin position="259"/>
        <end position="279"/>
    </location>
</feature>
<feature type="transmembrane region" description="Helical" evidence="1">
    <location>
        <begin position="286"/>
        <end position="306"/>
    </location>
</feature>
<feature type="domain" description="ABC transmembrane type-1" evidence="1">
    <location>
        <begin position="33"/>
        <end position="315"/>
    </location>
</feature>
<feature type="domain" description="ABC transporter" evidence="1">
    <location>
        <begin position="347"/>
        <end position="585"/>
    </location>
</feature>
<feature type="binding site" evidence="1">
    <location>
        <begin position="381"/>
        <end position="388"/>
    </location>
    <ligand>
        <name>ATP</name>
        <dbReference type="ChEBI" id="CHEBI:30616"/>
    </ligand>
</feature>